<keyword id="KW-0028">Amino-acid biosynthesis</keyword>
<keyword id="KW-0055">Arginine biosynthesis</keyword>
<keyword id="KW-0963">Cytoplasm</keyword>
<keyword id="KW-0521">NADP</keyword>
<keyword id="KW-0560">Oxidoreductase</keyword>
<keyword id="KW-1185">Reference proteome</keyword>
<feature type="chain" id="PRO_1000203412" description="N-acetyl-gamma-glutamyl-phosphate reductase">
    <location>
        <begin position="1"/>
        <end position="335"/>
    </location>
</feature>
<feature type="active site" evidence="1">
    <location>
        <position position="156"/>
    </location>
</feature>
<sequence>MLNVVIIGASGYAGAELALLVHKHPELNLKGLYVSAGSQDANKPFSALHPQCLGLVDLPVKPLDEAGMLEAKTGTDLVCLATAHEVSMNLAPQFLDAGIPVFDLSGAFRVQQDGFYDKYYGFTHDQPEWLAKAVYGLAEWNAEQIKKTDLVAVAGCYPTASLLALKPLMEAGLIKADTTPIINAVSGVSGAGRKAAIGTSFCEVSLNPYGVFNHRHQPEISYHLGGKVVFQPHLGNFVRGILATIYVQLADGVTAEQIDAAYQQAYSHSPIVRLSKQWPSIRSVAGTPFCDLHWQMQDGLLIVGSAIDNLLKGASSQALQCINLRFGFAPTTGLM</sequence>
<protein>
    <recommendedName>
        <fullName evidence="1">N-acetyl-gamma-glutamyl-phosphate reductase</fullName>
        <shortName evidence="1">AGPR</shortName>
        <ecNumber evidence="1">1.2.1.38</ecNumber>
    </recommendedName>
    <alternativeName>
        <fullName evidence="1">N-acetyl-glutamate semialdehyde dehydrogenase</fullName>
        <shortName evidence="1">NAGSA dehydrogenase</shortName>
    </alternativeName>
</protein>
<dbReference type="EC" id="1.2.1.38" evidence="1"/>
<dbReference type="EMBL" id="CP001616">
    <property type="protein sequence ID" value="ACQ91724.1"/>
    <property type="molecule type" value="Genomic_DNA"/>
</dbReference>
<dbReference type="RefSeq" id="WP_012728324.1">
    <property type="nucleotide sequence ID" value="NC_012691.1"/>
</dbReference>
<dbReference type="SMR" id="C4L7S5"/>
<dbReference type="STRING" id="595494.Tola_0094"/>
<dbReference type="KEGG" id="tau:Tola_0094"/>
<dbReference type="eggNOG" id="COG0002">
    <property type="taxonomic scope" value="Bacteria"/>
</dbReference>
<dbReference type="HOGENOM" id="CLU_006384_0_1_6"/>
<dbReference type="OrthoDB" id="9801289at2"/>
<dbReference type="UniPathway" id="UPA00068">
    <property type="reaction ID" value="UER00108"/>
</dbReference>
<dbReference type="Proteomes" id="UP000009073">
    <property type="component" value="Chromosome"/>
</dbReference>
<dbReference type="GO" id="GO:0005737">
    <property type="term" value="C:cytoplasm"/>
    <property type="evidence" value="ECO:0007669"/>
    <property type="project" value="UniProtKB-SubCell"/>
</dbReference>
<dbReference type="GO" id="GO:0003942">
    <property type="term" value="F:N-acetyl-gamma-glutamyl-phosphate reductase activity"/>
    <property type="evidence" value="ECO:0007669"/>
    <property type="project" value="UniProtKB-UniRule"/>
</dbReference>
<dbReference type="GO" id="GO:0051287">
    <property type="term" value="F:NAD binding"/>
    <property type="evidence" value="ECO:0007669"/>
    <property type="project" value="InterPro"/>
</dbReference>
<dbReference type="GO" id="GO:0070401">
    <property type="term" value="F:NADP+ binding"/>
    <property type="evidence" value="ECO:0007669"/>
    <property type="project" value="InterPro"/>
</dbReference>
<dbReference type="GO" id="GO:0006526">
    <property type="term" value="P:L-arginine biosynthetic process"/>
    <property type="evidence" value="ECO:0007669"/>
    <property type="project" value="UniProtKB-UniRule"/>
</dbReference>
<dbReference type="CDD" id="cd23934">
    <property type="entry name" value="AGPR_1_C"/>
    <property type="match status" value="1"/>
</dbReference>
<dbReference type="CDD" id="cd17895">
    <property type="entry name" value="AGPR_1_N"/>
    <property type="match status" value="1"/>
</dbReference>
<dbReference type="FunFam" id="3.30.360.10:FF:000014">
    <property type="entry name" value="N-acetyl-gamma-glutamyl-phosphate reductase"/>
    <property type="match status" value="1"/>
</dbReference>
<dbReference type="Gene3D" id="3.30.360.10">
    <property type="entry name" value="Dihydrodipicolinate Reductase, domain 2"/>
    <property type="match status" value="1"/>
</dbReference>
<dbReference type="Gene3D" id="3.40.50.720">
    <property type="entry name" value="NAD(P)-binding Rossmann-like Domain"/>
    <property type="match status" value="1"/>
</dbReference>
<dbReference type="HAMAP" id="MF_00150">
    <property type="entry name" value="ArgC_type1"/>
    <property type="match status" value="1"/>
</dbReference>
<dbReference type="InterPro" id="IPR023013">
    <property type="entry name" value="AGPR_AS"/>
</dbReference>
<dbReference type="InterPro" id="IPR000706">
    <property type="entry name" value="AGPR_type-1"/>
</dbReference>
<dbReference type="InterPro" id="IPR036291">
    <property type="entry name" value="NAD(P)-bd_dom_sf"/>
</dbReference>
<dbReference type="InterPro" id="IPR050085">
    <property type="entry name" value="NAGSA_dehydrogenase"/>
</dbReference>
<dbReference type="InterPro" id="IPR000534">
    <property type="entry name" value="Semialdehyde_DH_NAD-bd"/>
</dbReference>
<dbReference type="NCBIfam" id="TIGR01850">
    <property type="entry name" value="argC"/>
    <property type="match status" value="1"/>
</dbReference>
<dbReference type="PANTHER" id="PTHR32338:SF10">
    <property type="entry name" value="N-ACETYL-GAMMA-GLUTAMYL-PHOSPHATE REDUCTASE, CHLOROPLASTIC-RELATED"/>
    <property type="match status" value="1"/>
</dbReference>
<dbReference type="PANTHER" id="PTHR32338">
    <property type="entry name" value="N-ACETYL-GAMMA-GLUTAMYL-PHOSPHATE REDUCTASE, CHLOROPLASTIC-RELATED-RELATED"/>
    <property type="match status" value="1"/>
</dbReference>
<dbReference type="Pfam" id="PF01118">
    <property type="entry name" value="Semialdhyde_dh"/>
    <property type="match status" value="1"/>
</dbReference>
<dbReference type="Pfam" id="PF22698">
    <property type="entry name" value="Semialdhyde_dhC_1"/>
    <property type="match status" value="1"/>
</dbReference>
<dbReference type="SMART" id="SM00859">
    <property type="entry name" value="Semialdhyde_dh"/>
    <property type="match status" value="1"/>
</dbReference>
<dbReference type="SUPFAM" id="SSF55347">
    <property type="entry name" value="Glyceraldehyde-3-phosphate dehydrogenase-like, C-terminal domain"/>
    <property type="match status" value="1"/>
</dbReference>
<dbReference type="SUPFAM" id="SSF51735">
    <property type="entry name" value="NAD(P)-binding Rossmann-fold domains"/>
    <property type="match status" value="1"/>
</dbReference>
<dbReference type="PROSITE" id="PS01224">
    <property type="entry name" value="ARGC"/>
    <property type="match status" value="1"/>
</dbReference>
<proteinExistence type="inferred from homology"/>
<gene>
    <name evidence="1" type="primary">argC</name>
    <name type="ordered locus">Tola_0094</name>
</gene>
<accession>C4L7S5</accession>
<comment type="function">
    <text evidence="1">Catalyzes the NADPH-dependent reduction of N-acetyl-5-glutamyl phosphate to yield N-acetyl-L-glutamate 5-semialdehyde.</text>
</comment>
<comment type="catalytic activity">
    <reaction evidence="1">
        <text>N-acetyl-L-glutamate 5-semialdehyde + phosphate + NADP(+) = N-acetyl-L-glutamyl 5-phosphate + NADPH + H(+)</text>
        <dbReference type="Rhea" id="RHEA:21588"/>
        <dbReference type="ChEBI" id="CHEBI:15378"/>
        <dbReference type="ChEBI" id="CHEBI:29123"/>
        <dbReference type="ChEBI" id="CHEBI:43474"/>
        <dbReference type="ChEBI" id="CHEBI:57783"/>
        <dbReference type="ChEBI" id="CHEBI:57936"/>
        <dbReference type="ChEBI" id="CHEBI:58349"/>
        <dbReference type="EC" id="1.2.1.38"/>
    </reaction>
</comment>
<comment type="pathway">
    <text evidence="1">Amino-acid biosynthesis; L-arginine biosynthesis; N(2)-acetyl-L-ornithine from L-glutamate: step 3/4.</text>
</comment>
<comment type="subcellular location">
    <subcellularLocation>
        <location evidence="1">Cytoplasm</location>
    </subcellularLocation>
</comment>
<comment type="similarity">
    <text evidence="1">Belongs to the NAGSA dehydrogenase family. Type 1 subfamily.</text>
</comment>
<name>ARGC_TOLAT</name>
<reference key="1">
    <citation type="submission" date="2009-05" db="EMBL/GenBank/DDBJ databases">
        <title>Complete sequence of Tolumonas auensis DSM 9187.</title>
        <authorList>
            <consortium name="US DOE Joint Genome Institute"/>
            <person name="Lucas S."/>
            <person name="Copeland A."/>
            <person name="Lapidus A."/>
            <person name="Glavina del Rio T."/>
            <person name="Tice H."/>
            <person name="Bruce D."/>
            <person name="Goodwin L."/>
            <person name="Pitluck S."/>
            <person name="Chertkov O."/>
            <person name="Brettin T."/>
            <person name="Detter J.C."/>
            <person name="Han C."/>
            <person name="Larimer F."/>
            <person name="Land M."/>
            <person name="Hauser L."/>
            <person name="Kyrpides N."/>
            <person name="Mikhailova N."/>
            <person name="Spring S."/>
            <person name="Beller H."/>
        </authorList>
    </citation>
    <scope>NUCLEOTIDE SEQUENCE [LARGE SCALE GENOMIC DNA]</scope>
    <source>
        <strain>DSM 9187 / NBRC 110442 / TA 4</strain>
    </source>
</reference>
<evidence type="ECO:0000255" key="1">
    <source>
        <dbReference type="HAMAP-Rule" id="MF_00150"/>
    </source>
</evidence>
<organism>
    <name type="scientific">Tolumonas auensis (strain DSM 9187 / NBRC 110442 / TA 4)</name>
    <dbReference type="NCBI Taxonomy" id="595494"/>
    <lineage>
        <taxon>Bacteria</taxon>
        <taxon>Pseudomonadati</taxon>
        <taxon>Pseudomonadota</taxon>
        <taxon>Gammaproteobacteria</taxon>
        <taxon>Aeromonadales</taxon>
        <taxon>Aeromonadaceae</taxon>
        <taxon>Tolumonas</taxon>
    </lineage>
</organism>